<keyword id="KW-1185">Reference proteome</keyword>
<keyword id="KW-0687">Ribonucleoprotein</keyword>
<keyword id="KW-0689">Ribosomal protein</keyword>
<keyword id="KW-0694">RNA-binding</keyword>
<keyword id="KW-0699">rRNA-binding</keyword>
<organism>
    <name type="scientific">Nitratiruptor sp. (strain SB155-2)</name>
    <dbReference type="NCBI Taxonomy" id="387092"/>
    <lineage>
        <taxon>Bacteria</taxon>
        <taxon>Pseudomonadati</taxon>
        <taxon>Campylobacterota</taxon>
        <taxon>Epsilonproteobacteria</taxon>
        <taxon>Nautiliales</taxon>
        <taxon>Nitratiruptoraceae</taxon>
        <taxon>Nitratiruptor</taxon>
    </lineage>
</organism>
<sequence>MRESIQRRKNRLRIKRKRRVRGKITGSADRPRVSIFKSNRHFYAQAIDDTKGHTLAYSDGAKLGVKVNKEDVKKVAEDLAGKLKALNIETIVFDRNGYLYHGVVASFADALRENGIKF</sequence>
<comment type="function">
    <text evidence="1">This is one of the proteins that bind and probably mediate the attachment of the 5S RNA into the large ribosomal subunit, where it forms part of the central protuberance.</text>
</comment>
<comment type="subunit">
    <text evidence="1">Part of the 50S ribosomal subunit; part of the 5S rRNA/L5/L18/L25 subcomplex. Contacts the 5S and 23S rRNAs.</text>
</comment>
<comment type="similarity">
    <text evidence="1">Belongs to the universal ribosomal protein uL18 family.</text>
</comment>
<evidence type="ECO:0000255" key="1">
    <source>
        <dbReference type="HAMAP-Rule" id="MF_01337"/>
    </source>
</evidence>
<evidence type="ECO:0000305" key="2"/>
<proteinExistence type="inferred from homology"/>
<reference key="1">
    <citation type="journal article" date="2007" name="Proc. Natl. Acad. Sci. U.S.A.">
        <title>Deep-sea vent epsilon-proteobacterial genomes provide insights into emergence of pathogens.</title>
        <authorList>
            <person name="Nakagawa S."/>
            <person name="Takaki Y."/>
            <person name="Shimamura S."/>
            <person name="Reysenbach A.-L."/>
            <person name="Takai K."/>
            <person name="Horikoshi K."/>
        </authorList>
    </citation>
    <scope>NUCLEOTIDE SEQUENCE [LARGE SCALE GENOMIC DNA]</scope>
    <source>
        <strain>SB155-2</strain>
    </source>
</reference>
<dbReference type="EMBL" id="AP009178">
    <property type="protein sequence ID" value="BAF69353.1"/>
    <property type="molecule type" value="Genomic_DNA"/>
</dbReference>
<dbReference type="RefSeq" id="WP_012081616.1">
    <property type="nucleotide sequence ID" value="NC_009662.1"/>
</dbReference>
<dbReference type="SMR" id="A6Q1J4"/>
<dbReference type="FunCoup" id="A6Q1J4">
    <property type="interactions" value="537"/>
</dbReference>
<dbReference type="STRING" id="387092.NIS_0239"/>
<dbReference type="KEGG" id="nis:NIS_0239"/>
<dbReference type="eggNOG" id="COG0256">
    <property type="taxonomic scope" value="Bacteria"/>
</dbReference>
<dbReference type="HOGENOM" id="CLU_098841_0_1_7"/>
<dbReference type="InParanoid" id="A6Q1J4"/>
<dbReference type="OrthoDB" id="9810939at2"/>
<dbReference type="Proteomes" id="UP000001118">
    <property type="component" value="Chromosome"/>
</dbReference>
<dbReference type="GO" id="GO:0022625">
    <property type="term" value="C:cytosolic large ribosomal subunit"/>
    <property type="evidence" value="ECO:0007669"/>
    <property type="project" value="TreeGrafter"/>
</dbReference>
<dbReference type="GO" id="GO:0008097">
    <property type="term" value="F:5S rRNA binding"/>
    <property type="evidence" value="ECO:0007669"/>
    <property type="project" value="TreeGrafter"/>
</dbReference>
<dbReference type="GO" id="GO:0003735">
    <property type="term" value="F:structural constituent of ribosome"/>
    <property type="evidence" value="ECO:0007669"/>
    <property type="project" value="InterPro"/>
</dbReference>
<dbReference type="GO" id="GO:0006412">
    <property type="term" value="P:translation"/>
    <property type="evidence" value="ECO:0007669"/>
    <property type="project" value="UniProtKB-UniRule"/>
</dbReference>
<dbReference type="CDD" id="cd00432">
    <property type="entry name" value="Ribosomal_L18_L5e"/>
    <property type="match status" value="1"/>
</dbReference>
<dbReference type="Gene3D" id="3.30.420.100">
    <property type="match status" value="1"/>
</dbReference>
<dbReference type="HAMAP" id="MF_01337_B">
    <property type="entry name" value="Ribosomal_uL18_B"/>
    <property type="match status" value="1"/>
</dbReference>
<dbReference type="InterPro" id="IPR004389">
    <property type="entry name" value="Ribosomal_uL18_bac-type"/>
</dbReference>
<dbReference type="InterPro" id="IPR005484">
    <property type="entry name" value="Ribosomal_uL18_bac/euk"/>
</dbReference>
<dbReference type="NCBIfam" id="TIGR00060">
    <property type="entry name" value="L18_bact"/>
    <property type="match status" value="1"/>
</dbReference>
<dbReference type="PANTHER" id="PTHR12899">
    <property type="entry name" value="39S RIBOSOMAL PROTEIN L18, MITOCHONDRIAL"/>
    <property type="match status" value="1"/>
</dbReference>
<dbReference type="PANTHER" id="PTHR12899:SF3">
    <property type="entry name" value="LARGE RIBOSOMAL SUBUNIT PROTEIN UL18M"/>
    <property type="match status" value="1"/>
</dbReference>
<dbReference type="Pfam" id="PF00861">
    <property type="entry name" value="Ribosomal_L18p"/>
    <property type="match status" value="1"/>
</dbReference>
<dbReference type="SUPFAM" id="SSF53137">
    <property type="entry name" value="Translational machinery components"/>
    <property type="match status" value="1"/>
</dbReference>
<gene>
    <name evidence="1" type="primary">rplR</name>
    <name type="ordered locus">NIS_0239</name>
</gene>
<name>RL18_NITSB</name>
<accession>A6Q1J4</accession>
<feature type="chain" id="PRO_1000053069" description="Large ribosomal subunit protein uL18">
    <location>
        <begin position="1"/>
        <end position="118"/>
    </location>
</feature>
<protein>
    <recommendedName>
        <fullName evidence="1">Large ribosomal subunit protein uL18</fullName>
    </recommendedName>
    <alternativeName>
        <fullName evidence="2">50S ribosomal protein L18</fullName>
    </alternativeName>
</protein>